<keyword id="KW-0025">Alternative splicing</keyword>
<keyword id="KW-1185">Reference proteome</keyword>
<proteinExistence type="evidence at protein level"/>
<dbReference type="EMBL" id="AK015847">
    <property type="protein sequence ID" value="BAB29999.1"/>
    <property type="molecule type" value="mRNA"/>
</dbReference>
<dbReference type="EMBL" id="BC016199">
    <property type="status" value="NOT_ANNOTATED_CDS"/>
    <property type="molecule type" value="mRNA"/>
</dbReference>
<dbReference type="EMBL" id="BC038905">
    <property type="protein sequence ID" value="AAH38905.1"/>
    <property type="molecule type" value="mRNA"/>
</dbReference>
<dbReference type="CCDS" id="CCDS26511.1">
    <molecule id="Q9D531-3"/>
</dbReference>
<dbReference type="RefSeq" id="NP_001405689.1">
    <molecule id="Q9D531-3"/>
    <property type="nucleotide sequence ID" value="NM_001418760.1"/>
</dbReference>
<dbReference type="RefSeq" id="NP_083449.1">
    <molecule id="Q9D531-3"/>
    <property type="nucleotide sequence ID" value="NM_029173.5"/>
</dbReference>
<dbReference type="RefSeq" id="XP_006517023.1">
    <molecule id="Q9D531-3"/>
    <property type="nucleotide sequence ID" value="XM_006516960.2"/>
</dbReference>
<dbReference type="RefSeq" id="XP_006517024.1">
    <molecule id="Q9D531-3"/>
    <property type="nucleotide sequence ID" value="XM_006516961.5"/>
</dbReference>
<dbReference type="RefSeq" id="XP_006517025.1">
    <molecule id="Q9D531-3"/>
    <property type="nucleotide sequence ID" value="XM_006516962.5"/>
</dbReference>
<dbReference type="SMR" id="Q9D531"/>
<dbReference type="FunCoup" id="Q9D531">
    <property type="interactions" value="1"/>
</dbReference>
<dbReference type="STRING" id="10090.ENSMUSP00000021828"/>
<dbReference type="PhosphoSitePlus" id="Q9D531"/>
<dbReference type="jPOST" id="Q9D531"/>
<dbReference type="PaxDb" id="10090-ENSMUSP00000021828"/>
<dbReference type="ProteomicsDB" id="293479">
    <molecule id="Q9D531-3"/>
</dbReference>
<dbReference type="ProteomicsDB" id="293480">
    <molecule id="Q9D531-4"/>
</dbReference>
<dbReference type="Antibodypedia" id="43680">
    <property type="antibodies" value="206 antibodies from 18 providers"/>
</dbReference>
<dbReference type="DNASU" id="75124"/>
<dbReference type="Ensembl" id="ENSMUST00000021828.6">
    <molecule id="Q9D531-3"/>
    <property type="protein sequence ID" value="ENSMUSP00000021828.5"/>
    <property type="gene ID" value="ENSMUSG00000021396.6"/>
</dbReference>
<dbReference type="GeneID" id="75124"/>
<dbReference type="KEGG" id="mmu:75124"/>
<dbReference type="UCSC" id="uc007qme.1">
    <molecule id="Q9D531-3"/>
    <property type="organism name" value="mouse"/>
</dbReference>
<dbReference type="AGR" id="MGI:1922374"/>
<dbReference type="CTD" id="158046"/>
<dbReference type="MGI" id="MGI:1922374">
    <property type="gene designation" value="Nxnl2"/>
</dbReference>
<dbReference type="VEuPathDB" id="HostDB:ENSMUSG00000021396"/>
<dbReference type="eggNOG" id="KOG2501">
    <property type="taxonomic scope" value="Eukaryota"/>
</dbReference>
<dbReference type="GeneTree" id="ENSGT00940000161260"/>
<dbReference type="HOGENOM" id="CLU_116457_0_0_1"/>
<dbReference type="InParanoid" id="Q9D531"/>
<dbReference type="OMA" id="TDDYKHE"/>
<dbReference type="OrthoDB" id="409136at2759"/>
<dbReference type="PhylomeDB" id="Q9D531"/>
<dbReference type="TreeFam" id="TF331873"/>
<dbReference type="BioGRID-ORCS" id="75124">
    <property type="hits" value="0 hits in 76 CRISPR screens"/>
</dbReference>
<dbReference type="ChiTaRS" id="Nxnl2">
    <property type="organism name" value="mouse"/>
</dbReference>
<dbReference type="PRO" id="PR:Q9D531"/>
<dbReference type="Proteomes" id="UP000000589">
    <property type="component" value="Chromosome 13"/>
</dbReference>
<dbReference type="RNAct" id="Q9D531">
    <property type="molecule type" value="protein"/>
</dbReference>
<dbReference type="Bgee" id="ENSMUSG00000021396">
    <property type="expression patterns" value="Expressed in retinal neural layer and 55 other cell types or tissues"/>
</dbReference>
<dbReference type="GO" id="GO:0045494">
    <property type="term" value="P:photoreceptor cell maintenance"/>
    <property type="evidence" value="ECO:0007669"/>
    <property type="project" value="InterPro"/>
</dbReference>
<dbReference type="GO" id="GO:0007608">
    <property type="term" value="P:sensory perception of smell"/>
    <property type="evidence" value="ECO:0000315"/>
    <property type="project" value="MGI"/>
</dbReference>
<dbReference type="GO" id="GO:0007601">
    <property type="term" value="P:visual perception"/>
    <property type="evidence" value="ECO:0000315"/>
    <property type="project" value="MGI"/>
</dbReference>
<dbReference type="CDD" id="cd02964">
    <property type="entry name" value="TryX_like_family"/>
    <property type="match status" value="1"/>
</dbReference>
<dbReference type="Gene3D" id="3.40.30.10">
    <property type="entry name" value="Glutaredoxin"/>
    <property type="match status" value="1"/>
</dbReference>
<dbReference type="InterPro" id="IPR029519">
    <property type="entry name" value="RdCVF2"/>
</dbReference>
<dbReference type="InterPro" id="IPR012336">
    <property type="entry name" value="Thioredoxin-like_fold"/>
</dbReference>
<dbReference type="InterPro" id="IPR036249">
    <property type="entry name" value="Thioredoxin-like_sf"/>
</dbReference>
<dbReference type="PANTHER" id="PTHR46762">
    <property type="entry name" value="NUCLEOREDOXIN-LIKE PROTEIN 2"/>
    <property type="match status" value="1"/>
</dbReference>
<dbReference type="PANTHER" id="PTHR46762:SF1">
    <property type="entry name" value="NUCLEOREDOXIN-LIKE PROTEIN 2"/>
    <property type="match status" value="1"/>
</dbReference>
<dbReference type="Pfam" id="PF13905">
    <property type="entry name" value="Thioredoxin_8"/>
    <property type="match status" value="1"/>
</dbReference>
<dbReference type="SUPFAM" id="SSF52833">
    <property type="entry name" value="Thioredoxin-like"/>
    <property type="match status" value="1"/>
</dbReference>
<sequence>MVDVLGGRRLVTREGTVVEAEVALQNKVVALYFAAGRCSPSRDFTPLLCDFYTELVSEARRPAPFEVVFVSADGSAEEMLDFMRELHGSWLALPFHDPYRHELKKRYEITAIPKLVVIKQNGAVITNKGRKQIRERGLACFQNWVEAADVFQNFSG</sequence>
<gene>
    <name type="primary">Nxnl2</name>
</gene>
<reference key="1">
    <citation type="journal article" date="2005" name="Science">
        <title>The transcriptional landscape of the mammalian genome.</title>
        <authorList>
            <person name="Carninci P."/>
            <person name="Kasukawa T."/>
            <person name="Katayama S."/>
            <person name="Gough J."/>
            <person name="Frith M.C."/>
            <person name="Maeda N."/>
            <person name="Oyama R."/>
            <person name="Ravasi T."/>
            <person name="Lenhard B."/>
            <person name="Wells C."/>
            <person name="Kodzius R."/>
            <person name="Shimokawa K."/>
            <person name="Bajic V.B."/>
            <person name="Brenner S.E."/>
            <person name="Batalov S."/>
            <person name="Forrest A.R."/>
            <person name="Zavolan M."/>
            <person name="Davis M.J."/>
            <person name="Wilming L.G."/>
            <person name="Aidinis V."/>
            <person name="Allen J.E."/>
            <person name="Ambesi-Impiombato A."/>
            <person name="Apweiler R."/>
            <person name="Aturaliya R.N."/>
            <person name="Bailey T.L."/>
            <person name="Bansal M."/>
            <person name="Baxter L."/>
            <person name="Beisel K.W."/>
            <person name="Bersano T."/>
            <person name="Bono H."/>
            <person name="Chalk A.M."/>
            <person name="Chiu K.P."/>
            <person name="Choudhary V."/>
            <person name="Christoffels A."/>
            <person name="Clutterbuck D.R."/>
            <person name="Crowe M.L."/>
            <person name="Dalla E."/>
            <person name="Dalrymple B.P."/>
            <person name="de Bono B."/>
            <person name="Della Gatta G."/>
            <person name="di Bernardo D."/>
            <person name="Down T."/>
            <person name="Engstrom P."/>
            <person name="Fagiolini M."/>
            <person name="Faulkner G."/>
            <person name="Fletcher C.F."/>
            <person name="Fukushima T."/>
            <person name="Furuno M."/>
            <person name="Futaki S."/>
            <person name="Gariboldi M."/>
            <person name="Georgii-Hemming P."/>
            <person name="Gingeras T.R."/>
            <person name="Gojobori T."/>
            <person name="Green R.E."/>
            <person name="Gustincich S."/>
            <person name="Harbers M."/>
            <person name="Hayashi Y."/>
            <person name="Hensch T.K."/>
            <person name="Hirokawa N."/>
            <person name="Hill D."/>
            <person name="Huminiecki L."/>
            <person name="Iacono M."/>
            <person name="Ikeo K."/>
            <person name="Iwama A."/>
            <person name="Ishikawa T."/>
            <person name="Jakt M."/>
            <person name="Kanapin A."/>
            <person name="Katoh M."/>
            <person name="Kawasawa Y."/>
            <person name="Kelso J."/>
            <person name="Kitamura H."/>
            <person name="Kitano H."/>
            <person name="Kollias G."/>
            <person name="Krishnan S.P."/>
            <person name="Kruger A."/>
            <person name="Kummerfeld S.K."/>
            <person name="Kurochkin I.V."/>
            <person name="Lareau L.F."/>
            <person name="Lazarevic D."/>
            <person name="Lipovich L."/>
            <person name="Liu J."/>
            <person name="Liuni S."/>
            <person name="McWilliam S."/>
            <person name="Madan Babu M."/>
            <person name="Madera M."/>
            <person name="Marchionni L."/>
            <person name="Matsuda H."/>
            <person name="Matsuzawa S."/>
            <person name="Miki H."/>
            <person name="Mignone F."/>
            <person name="Miyake S."/>
            <person name="Morris K."/>
            <person name="Mottagui-Tabar S."/>
            <person name="Mulder N."/>
            <person name="Nakano N."/>
            <person name="Nakauchi H."/>
            <person name="Ng P."/>
            <person name="Nilsson R."/>
            <person name="Nishiguchi S."/>
            <person name="Nishikawa S."/>
            <person name="Nori F."/>
            <person name="Ohara O."/>
            <person name="Okazaki Y."/>
            <person name="Orlando V."/>
            <person name="Pang K.C."/>
            <person name="Pavan W.J."/>
            <person name="Pavesi G."/>
            <person name="Pesole G."/>
            <person name="Petrovsky N."/>
            <person name="Piazza S."/>
            <person name="Reed J."/>
            <person name="Reid J.F."/>
            <person name="Ring B.Z."/>
            <person name="Ringwald M."/>
            <person name="Rost B."/>
            <person name="Ruan Y."/>
            <person name="Salzberg S.L."/>
            <person name="Sandelin A."/>
            <person name="Schneider C."/>
            <person name="Schoenbach C."/>
            <person name="Sekiguchi K."/>
            <person name="Semple C.A."/>
            <person name="Seno S."/>
            <person name="Sessa L."/>
            <person name="Sheng Y."/>
            <person name="Shibata Y."/>
            <person name="Shimada H."/>
            <person name="Shimada K."/>
            <person name="Silva D."/>
            <person name="Sinclair B."/>
            <person name="Sperling S."/>
            <person name="Stupka E."/>
            <person name="Sugiura K."/>
            <person name="Sultana R."/>
            <person name="Takenaka Y."/>
            <person name="Taki K."/>
            <person name="Tammoja K."/>
            <person name="Tan S.L."/>
            <person name="Tang S."/>
            <person name="Taylor M.S."/>
            <person name="Tegner J."/>
            <person name="Teichmann S.A."/>
            <person name="Ueda H.R."/>
            <person name="van Nimwegen E."/>
            <person name="Verardo R."/>
            <person name="Wei C.L."/>
            <person name="Yagi K."/>
            <person name="Yamanishi H."/>
            <person name="Zabarovsky E."/>
            <person name="Zhu S."/>
            <person name="Zimmer A."/>
            <person name="Hide W."/>
            <person name="Bult C."/>
            <person name="Grimmond S.M."/>
            <person name="Teasdale R.D."/>
            <person name="Liu E.T."/>
            <person name="Brusic V."/>
            <person name="Quackenbush J."/>
            <person name="Wahlestedt C."/>
            <person name="Mattick J.S."/>
            <person name="Hume D.A."/>
            <person name="Kai C."/>
            <person name="Sasaki D."/>
            <person name="Tomaru Y."/>
            <person name="Fukuda S."/>
            <person name="Kanamori-Katayama M."/>
            <person name="Suzuki M."/>
            <person name="Aoki J."/>
            <person name="Arakawa T."/>
            <person name="Iida J."/>
            <person name="Imamura K."/>
            <person name="Itoh M."/>
            <person name="Kato T."/>
            <person name="Kawaji H."/>
            <person name="Kawagashira N."/>
            <person name="Kawashima T."/>
            <person name="Kojima M."/>
            <person name="Kondo S."/>
            <person name="Konno H."/>
            <person name="Nakano K."/>
            <person name="Ninomiya N."/>
            <person name="Nishio T."/>
            <person name="Okada M."/>
            <person name="Plessy C."/>
            <person name="Shibata K."/>
            <person name="Shiraki T."/>
            <person name="Suzuki S."/>
            <person name="Tagami M."/>
            <person name="Waki K."/>
            <person name="Watahiki A."/>
            <person name="Okamura-Oho Y."/>
            <person name="Suzuki H."/>
            <person name="Kawai J."/>
            <person name="Hayashizaki Y."/>
        </authorList>
    </citation>
    <scope>NUCLEOTIDE SEQUENCE [LARGE SCALE MRNA] (ISOFORM 1)</scope>
    <source>
        <strain>C57BL/6J</strain>
        <tissue>Testis</tissue>
    </source>
</reference>
<reference key="2">
    <citation type="journal article" date="2004" name="Genome Res.">
        <title>The status, quality, and expansion of the NIH full-length cDNA project: the Mammalian Gene Collection (MGC).</title>
        <authorList>
            <consortium name="The MGC Project Team"/>
        </authorList>
    </citation>
    <scope>NUCLEOTIDE SEQUENCE [LARGE SCALE MRNA] (ISOFORMS 1 AND 2)</scope>
    <source>
        <strain>C57BL/6J</strain>
        <tissue>Mammary tumor</tissue>
        <tissue>Retina</tissue>
    </source>
</reference>
<reference key="3">
    <citation type="journal article" date="2007" name="BMC Mol. Biol.">
        <title>Rod-derived cone viability factor-2 is a novel bifunctional-thioredoxin-like protein with therapeutic potential.</title>
        <authorList>
            <person name="Chalmel F."/>
            <person name="Leveillard T."/>
            <person name="Jaillard C."/>
            <person name="Lardenois A."/>
            <person name="Berdugo N."/>
            <person name="Morel E."/>
            <person name="Koehl P."/>
            <person name="Lambrou G."/>
            <person name="Holmgren A."/>
            <person name="Sahel J.A."/>
            <person name="Poch O."/>
        </authorList>
    </citation>
    <scope>FUNCTION (ISOFORM 2)</scope>
    <scope>TISSUE SPECIFICITY</scope>
    <scope>ALTERNATIVE SPLICING</scope>
</reference>
<reference key="4">
    <citation type="journal article" date="2010" name="Cell">
        <title>A tissue-specific atlas of mouse protein phosphorylation and expression.</title>
        <authorList>
            <person name="Huttlin E.L."/>
            <person name="Jedrychowski M.P."/>
            <person name="Elias J.E."/>
            <person name="Goswami T."/>
            <person name="Rad R."/>
            <person name="Beausoleil S.A."/>
            <person name="Villen J."/>
            <person name="Haas W."/>
            <person name="Sowa M.E."/>
            <person name="Gygi S.P."/>
        </authorList>
    </citation>
    <scope>IDENTIFICATION BY MASS SPECTROMETRY [LARGE SCALE ANALYSIS]</scope>
    <source>
        <tissue>Testis</tissue>
    </source>
</reference>
<reference key="5">
    <citation type="journal article" date="2012" name="Hum. Mol. Genet.">
        <title>Nxnl2 splicing results in dual functions in neuronal cell survival and maintenance of cell integrity.</title>
        <authorList>
            <person name="Jaillard C."/>
            <person name="Mouret A."/>
            <person name="Niepon M.L."/>
            <person name="Clerin E."/>
            <person name="Yang Y."/>
            <person name="Lee-Rivera I."/>
            <person name="Ait-Ali N."/>
            <person name="Millet-Puel G."/>
            <person name="Cronin T."/>
            <person name="Sedmak T."/>
            <person name="Raffelsberger W."/>
            <person name="Kinzel B."/>
            <person name="Trembleau A."/>
            <person name="Poch O."/>
            <person name="Bennett J."/>
            <person name="Wolfrum U."/>
            <person name="Lledo P.M."/>
            <person name="Sahel J.A."/>
            <person name="Leveillard T."/>
        </authorList>
    </citation>
    <scope>FUNCTION</scope>
    <scope>DISRUPTION PHENOTYPE</scope>
    <scope>TISSUE SPECIFICITY</scope>
</reference>
<name>NXNL2_MOUSE</name>
<comment type="function">
    <text evidence="2">May be involved in the maintenance of both the function and the viability of sensory neurons, including photoreceptors and olfactory neurons. In the retina, isoform 1 may be required for rod function and isoform 2 for cone viability and function.</text>
</comment>
<comment type="alternative products">
    <event type="alternative splicing"/>
    <isoform>
        <id>Q9D531-3</id>
        <name>1</name>
        <name>RdCVF2_L</name>
        <sequence type="displayed"/>
    </isoform>
    <isoform>
        <id>Q9D531-4</id>
        <name>2</name>
        <name>RdCVF2</name>
        <name>RdCVF2_S</name>
        <sequence type="described" ref="VSP_053273 VSP_053274"/>
    </isoform>
</comment>
<comment type="tissue specificity">
    <text evidence="1 2">Both isoforms are expressed in retina, in the photoreceptor layer, and throughout the olfactory sensory neuron layer of the nasal epithelium, in neurons. Also expressed at low levels in brain and testis.</text>
</comment>
<comment type="disruption phenotype">
    <text evidence="2">At 10 months of age, mutant animals show signs of photoreceptor dysfunction. The progressive loss of cone function is followed by cone cell death, while in rods, the outer segment length id reduced, but not rod cell death is not observed. At 12 months, mice present a stronger age-dependent impairment of fine odor discrimination than their wild-type counterparts.</text>
</comment>
<comment type="similarity">
    <text evidence="4">Belongs to the nucleoredoxin family.</text>
</comment>
<feature type="chain" id="PRO_0000229736" description="Nucleoredoxin-like protein 2">
    <location>
        <begin position="1"/>
        <end position="156"/>
    </location>
</feature>
<feature type="domain" description="Thioredoxin">
    <location>
        <begin position="9"/>
        <end position="147"/>
    </location>
</feature>
<feature type="splice variant" id="VSP_053273" description="In isoform 2." evidence="3">
    <original>H</original>
    <variation>Q</variation>
    <location>
        <position position="101"/>
    </location>
</feature>
<feature type="splice variant" id="VSP_053274" description="In isoform 2." evidence="3">
    <location>
        <begin position="102"/>
        <end position="156"/>
    </location>
</feature>
<evidence type="ECO:0000269" key="1">
    <source>
    </source>
</evidence>
<evidence type="ECO:0000269" key="2">
    <source>
    </source>
</evidence>
<evidence type="ECO:0000303" key="3">
    <source>
    </source>
</evidence>
<evidence type="ECO:0000305" key="4"/>
<organism>
    <name type="scientific">Mus musculus</name>
    <name type="common">Mouse</name>
    <dbReference type="NCBI Taxonomy" id="10090"/>
    <lineage>
        <taxon>Eukaryota</taxon>
        <taxon>Metazoa</taxon>
        <taxon>Chordata</taxon>
        <taxon>Craniata</taxon>
        <taxon>Vertebrata</taxon>
        <taxon>Euteleostomi</taxon>
        <taxon>Mammalia</taxon>
        <taxon>Eutheria</taxon>
        <taxon>Euarchontoglires</taxon>
        <taxon>Glires</taxon>
        <taxon>Rodentia</taxon>
        <taxon>Myomorpha</taxon>
        <taxon>Muroidea</taxon>
        <taxon>Muridae</taxon>
        <taxon>Murinae</taxon>
        <taxon>Mus</taxon>
        <taxon>Mus</taxon>
    </lineage>
</organism>
<protein>
    <recommendedName>
        <fullName>Nucleoredoxin-like protein 2</fullName>
    </recommendedName>
    <alternativeName>
        <fullName>Rod-derived cone viability factor 2</fullName>
        <shortName>RdCVF2</shortName>
    </alternativeName>
</protein>
<accession>Q9D531</accession>
<accession>Q91WB0</accession>